<dbReference type="EMBL" id="AM236080">
    <property type="protein sequence ID" value="CAK08112.1"/>
    <property type="molecule type" value="Genomic_DNA"/>
</dbReference>
<dbReference type="RefSeq" id="WP_003540107.1">
    <property type="nucleotide sequence ID" value="NC_008380.1"/>
</dbReference>
<dbReference type="SMR" id="Q1MG11"/>
<dbReference type="EnsemblBacteria" id="CAK08112">
    <property type="protein sequence ID" value="CAK08112"/>
    <property type="gene ID" value="RL2624"/>
</dbReference>
<dbReference type="GeneID" id="67483392"/>
<dbReference type="KEGG" id="rle:RL2624"/>
<dbReference type="eggNOG" id="COG0522">
    <property type="taxonomic scope" value="Bacteria"/>
</dbReference>
<dbReference type="HOGENOM" id="CLU_092403_0_0_5"/>
<dbReference type="Proteomes" id="UP000006575">
    <property type="component" value="Chromosome"/>
</dbReference>
<dbReference type="GO" id="GO:0015935">
    <property type="term" value="C:small ribosomal subunit"/>
    <property type="evidence" value="ECO:0007669"/>
    <property type="project" value="InterPro"/>
</dbReference>
<dbReference type="GO" id="GO:0019843">
    <property type="term" value="F:rRNA binding"/>
    <property type="evidence" value="ECO:0007669"/>
    <property type="project" value="UniProtKB-UniRule"/>
</dbReference>
<dbReference type="GO" id="GO:0003735">
    <property type="term" value="F:structural constituent of ribosome"/>
    <property type="evidence" value="ECO:0007669"/>
    <property type="project" value="InterPro"/>
</dbReference>
<dbReference type="GO" id="GO:0042274">
    <property type="term" value="P:ribosomal small subunit biogenesis"/>
    <property type="evidence" value="ECO:0007669"/>
    <property type="project" value="TreeGrafter"/>
</dbReference>
<dbReference type="GO" id="GO:0006412">
    <property type="term" value="P:translation"/>
    <property type="evidence" value="ECO:0007669"/>
    <property type="project" value="UniProtKB-UniRule"/>
</dbReference>
<dbReference type="CDD" id="cd00165">
    <property type="entry name" value="S4"/>
    <property type="match status" value="1"/>
</dbReference>
<dbReference type="FunFam" id="3.10.290.10:FF:000001">
    <property type="entry name" value="30S ribosomal protein S4"/>
    <property type="match status" value="1"/>
</dbReference>
<dbReference type="Gene3D" id="1.10.1050.10">
    <property type="entry name" value="Ribosomal Protein S4 Delta 41, Chain A, domain 1"/>
    <property type="match status" value="1"/>
</dbReference>
<dbReference type="Gene3D" id="3.10.290.10">
    <property type="entry name" value="RNA-binding S4 domain"/>
    <property type="match status" value="1"/>
</dbReference>
<dbReference type="HAMAP" id="MF_01306_B">
    <property type="entry name" value="Ribosomal_uS4_B"/>
    <property type="match status" value="1"/>
</dbReference>
<dbReference type="InterPro" id="IPR022801">
    <property type="entry name" value="Ribosomal_uS4"/>
</dbReference>
<dbReference type="InterPro" id="IPR005709">
    <property type="entry name" value="Ribosomal_uS4_bac-type"/>
</dbReference>
<dbReference type="InterPro" id="IPR018079">
    <property type="entry name" value="Ribosomal_uS4_CS"/>
</dbReference>
<dbReference type="InterPro" id="IPR001912">
    <property type="entry name" value="Ribosomal_uS4_N"/>
</dbReference>
<dbReference type="InterPro" id="IPR002942">
    <property type="entry name" value="S4_RNA-bd"/>
</dbReference>
<dbReference type="InterPro" id="IPR036986">
    <property type="entry name" value="S4_RNA-bd_sf"/>
</dbReference>
<dbReference type="NCBIfam" id="NF003717">
    <property type="entry name" value="PRK05327.1"/>
    <property type="match status" value="1"/>
</dbReference>
<dbReference type="NCBIfam" id="TIGR01017">
    <property type="entry name" value="rpsD_bact"/>
    <property type="match status" value="1"/>
</dbReference>
<dbReference type="PANTHER" id="PTHR11831">
    <property type="entry name" value="30S 40S RIBOSOMAL PROTEIN"/>
    <property type="match status" value="1"/>
</dbReference>
<dbReference type="PANTHER" id="PTHR11831:SF4">
    <property type="entry name" value="SMALL RIBOSOMAL SUBUNIT PROTEIN US4M"/>
    <property type="match status" value="1"/>
</dbReference>
<dbReference type="Pfam" id="PF00163">
    <property type="entry name" value="Ribosomal_S4"/>
    <property type="match status" value="1"/>
</dbReference>
<dbReference type="Pfam" id="PF01479">
    <property type="entry name" value="S4"/>
    <property type="match status" value="1"/>
</dbReference>
<dbReference type="SMART" id="SM01390">
    <property type="entry name" value="Ribosomal_S4"/>
    <property type="match status" value="1"/>
</dbReference>
<dbReference type="SMART" id="SM00363">
    <property type="entry name" value="S4"/>
    <property type="match status" value="1"/>
</dbReference>
<dbReference type="SUPFAM" id="SSF55174">
    <property type="entry name" value="Alpha-L RNA-binding motif"/>
    <property type="match status" value="1"/>
</dbReference>
<dbReference type="PROSITE" id="PS00632">
    <property type="entry name" value="RIBOSOMAL_S4"/>
    <property type="match status" value="1"/>
</dbReference>
<dbReference type="PROSITE" id="PS50889">
    <property type="entry name" value="S4"/>
    <property type="match status" value="1"/>
</dbReference>
<gene>
    <name evidence="1" type="primary">rpsD</name>
    <name type="ordered locus">RL2624</name>
</gene>
<reference key="1">
    <citation type="journal article" date="2006" name="Genome Biol.">
        <title>The genome of Rhizobium leguminosarum has recognizable core and accessory components.</title>
        <authorList>
            <person name="Young J.P.W."/>
            <person name="Crossman L.C."/>
            <person name="Johnston A.W.B."/>
            <person name="Thomson N.R."/>
            <person name="Ghazoui Z.F."/>
            <person name="Hull K.H."/>
            <person name="Wexler M."/>
            <person name="Curson A.R.J."/>
            <person name="Todd J.D."/>
            <person name="Poole P.S."/>
            <person name="Mauchline T.H."/>
            <person name="East A.K."/>
            <person name="Quail M.A."/>
            <person name="Churcher C."/>
            <person name="Arrowsmith C."/>
            <person name="Cherevach I."/>
            <person name="Chillingworth T."/>
            <person name="Clarke K."/>
            <person name="Cronin A."/>
            <person name="Davis P."/>
            <person name="Fraser A."/>
            <person name="Hance Z."/>
            <person name="Hauser H."/>
            <person name="Jagels K."/>
            <person name="Moule S."/>
            <person name="Mungall K."/>
            <person name="Norbertczak H."/>
            <person name="Rabbinowitsch E."/>
            <person name="Sanders M."/>
            <person name="Simmonds M."/>
            <person name="Whitehead S."/>
            <person name="Parkhill J."/>
        </authorList>
    </citation>
    <scope>NUCLEOTIDE SEQUENCE [LARGE SCALE GENOMIC DNA]</scope>
    <source>
        <strain>DSM 114642 / LMG 32736 / 3841</strain>
    </source>
</reference>
<comment type="function">
    <text evidence="1">One of the primary rRNA binding proteins, it binds directly to 16S rRNA where it nucleates assembly of the body of the 30S subunit.</text>
</comment>
<comment type="function">
    <text evidence="1">With S5 and S12 plays an important role in translational accuracy.</text>
</comment>
<comment type="subunit">
    <text evidence="1">Part of the 30S ribosomal subunit. Contacts protein S5. The interaction surface between S4 and S5 is involved in control of translational fidelity.</text>
</comment>
<comment type="similarity">
    <text evidence="1">Belongs to the universal ribosomal protein uS4 family.</text>
</comment>
<name>RS4_RHIJ3</name>
<organism>
    <name type="scientific">Rhizobium johnstonii (strain DSM 114642 / LMG 32736 / 3841)</name>
    <name type="common">Rhizobium leguminosarum bv. viciae</name>
    <dbReference type="NCBI Taxonomy" id="216596"/>
    <lineage>
        <taxon>Bacteria</taxon>
        <taxon>Pseudomonadati</taxon>
        <taxon>Pseudomonadota</taxon>
        <taxon>Alphaproteobacteria</taxon>
        <taxon>Hyphomicrobiales</taxon>
        <taxon>Rhizobiaceae</taxon>
        <taxon>Rhizobium/Agrobacterium group</taxon>
        <taxon>Rhizobium</taxon>
        <taxon>Rhizobium johnstonii</taxon>
    </lineage>
</organism>
<accession>Q1MG11</accession>
<proteinExistence type="inferred from homology"/>
<protein>
    <recommendedName>
        <fullName evidence="1">Small ribosomal subunit protein uS4</fullName>
    </recommendedName>
    <alternativeName>
        <fullName evidence="3">30S ribosomal protein S4</fullName>
    </alternativeName>
</protein>
<feature type="chain" id="PRO_0000293349" description="Small ribosomal subunit protein uS4">
    <location>
        <begin position="1"/>
        <end position="205"/>
    </location>
</feature>
<feature type="domain" description="S4 RNA-binding" evidence="1">
    <location>
        <begin position="94"/>
        <end position="157"/>
    </location>
</feature>
<feature type="region of interest" description="Disordered" evidence="2">
    <location>
        <begin position="1"/>
        <end position="46"/>
    </location>
</feature>
<feature type="compositionally biased region" description="Basic and acidic residues" evidence="2">
    <location>
        <begin position="1"/>
        <end position="16"/>
    </location>
</feature>
<evidence type="ECO:0000255" key="1">
    <source>
        <dbReference type="HAMAP-Rule" id="MF_01306"/>
    </source>
</evidence>
<evidence type="ECO:0000256" key="2">
    <source>
        <dbReference type="SAM" id="MobiDB-lite"/>
    </source>
</evidence>
<evidence type="ECO:0000305" key="3"/>
<sequence>MSKRESSKYKIDRRMGENIWGRPKSPVNRREYGPGQHGQRRKGKLSDFGVQLRAKQKLKGYYGDLREKQFRAIFAEADRRKGDTSENLIGLLESRLDAIVYRAKFVPTVFAARQFVNHGHVSVNGVRVNIGSYRCKAGDVIEVREKSKQLVIVLEAVSLAERDVPDYIEVDHNKMVATFGRVPTLSDVPFPVVMEPHLVVEFYSR</sequence>
<keyword id="KW-0687">Ribonucleoprotein</keyword>
<keyword id="KW-0689">Ribosomal protein</keyword>
<keyword id="KW-0694">RNA-binding</keyword>
<keyword id="KW-0699">rRNA-binding</keyword>